<gene>
    <name type="primary">DCAF4L2</name>
    <name type="synonym">WDR21C</name>
</gene>
<dbReference type="EMBL" id="AK093094">
    <property type="protein sequence ID" value="BAC04051.1"/>
    <property type="molecule type" value="mRNA"/>
</dbReference>
<dbReference type="EMBL" id="BC111778">
    <property type="protein sequence ID" value="AAI11779.1"/>
    <property type="molecule type" value="mRNA"/>
</dbReference>
<dbReference type="CCDS" id="CCDS6245.1"/>
<dbReference type="RefSeq" id="NP_689631.1">
    <property type="nucleotide sequence ID" value="NM_152418.4"/>
</dbReference>
<dbReference type="SMR" id="Q8NA75"/>
<dbReference type="BioGRID" id="126496">
    <property type="interactions" value="45"/>
</dbReference>
<dbReference type="FunCoup" id="Q8NA75">
    <property type="interactions" value="11"/>
</dbReference>
<dbReference type="IntAct" id="Q8NA75">
    <property type="interactions" value="13"/>
</dbReference>
<dbReference type="STRING" id="9606.ENSP00000316496"/>
<dbReference type="iPTMnet" id="Q8NA75"/>
<dbReference type="PhosphoSitePlus" id="Q8NA75"/>
<dbReference type="BioMuta" id="DCAF4L2"/>
<dbReference type="DMDM" id="74760061"/>
<dbReference type="MassIVE" id="Q8NA75"/>
<dbReference type="PaxDb" id="9606-ENSP00000316496"/>
<dbReference type="PeptideAtlas" id="Q8NA75"/>
<dbReference type="ProteomicsDB" id="72653"/>
<dbReference type="Pumba" id="Q8NA75"/>
<dbReference type="Antibodypedia" id="54831">
    <property type="antibodies" value="89 antibodies from 19 providers"/>
</dbReference>
<dbReference type="DNASU" id="138009"/>
<dbReference type="Ensembl" id="ENST00000319675.5">
    <property type="protein sequence ID" value="ENSP00000316496.3"/>
    <property type="gene ID" value="ENSG00000176566.5"/>
</dbReference>
<dbReference type="GeneID" id="138009"/>
<dbReference type="KEGG" id="hsa:138009"/>
<dbReference type="MANE-Select" id="ENST00000319675.5">
    <property type="protein sequence ID" value="ENSP00000316496.3"/>
    <property type="RefSeq nucleotide sequence ID" value="NM_152418.4"/>
    <property type="RefSeq protein sequence ID" value="NP_689631.1"/>
</dbReference>
<dbReference type="UCSC" id="uc003ydz.3">
    <property type="organism name" value="human"/>
</dbReference>
<dbReference type="AGR" id="HGNC:26657"/>
<dbReference type="CTD" id="138009"/>
<dbReference type="DisGeNET" id="138009"/>
<dbReference type="GeneCards" id="DCAF4L2"/>
<dbReference type="HGNC" id="HGNC:26657">
    <property type="gene designation" value="DCAF4L2"/>
</dbReference>
<dbReference type="HPA" id="ENSG00000176566">
    <property type="expression patterns" value="Tissue enriched (testis)"/>
</dbReference>
<dbReference type="MIM" id="620421">
    <property type="type" value="gene"/>
</dbReference>
<dbReference type="neXtProt" id="NX_Q8NA75"/>
<dbReference type="OpenTargets" id="ENSG00000176566"/>
<dbReference type="PharmGKB" id="PA165585467"/>
<dbReference type="VEuPathDB" id="HostDB:ENSG00000176566"/>
<dbReference type="eggNOG" id="KOG2695">
    <property type="taxonomic scope" value="Eukaryota"/>
</dbReference>
<dbReference type="GeneTree" id="ENSGT00390000009546"/>
<dbReference type="HOGENOM" id="CLU_039586_1_0_1"/>
<dbReference type="InParanoid" id="Q8NA75"/>
<dbReference type="OMA" id="SIHAYHC"/>
<dbReference type="OrthoDB" id="128867at2759"/>
<dbReference type="PAN-GO" id="Q8NA75">
    <property type="GO annotations" value="1 GO annotation based on evolutionary models"/>
</dbReference>
<dbReference type="PhylomeDB" id="Q8NA75"/>
<dbReference type="TreeFam" id="TF332050"/>
<dbReference type="PathwayCommons" id="Q8NA75"/>
<dbReference type="SignaLink" id="Q8NA75"/>
<dbReference type="BioGRID-ORCS" id="138009">
    <property type="hits" value="14 hits in 1181 CRISPR screens"/>
</dbReference>
<dbReference type="GenomeRNAi" id="138009"/>
<dbReference type="Pharos" id="Q8NA75">
    <property type="development level" value="Tdark"/>
</dbReference>
<dbReference type="PRO" id="PR:Q8NA75"/>
<dbReference type="Proteomes" id="UP000005640">
    <property type="component" value="Chromosome 8"/>
</dbReference>
<dbReference type="RNAct" id="Q8NA75">
    <property type="molecule type" value="protein"/>
</dbReference>
<dbReference type="Bgee" id="ENSG00000176566">
    <property type="expression patterns" value="Expressed in primordial germ cell in gonad and 26 other cell types or tissues"/>
</dbReference>
<dbReference type="GO" id="GO:0080008">
    <property type="term" value="C:Cul4-RING E3 ubiquitin ligase complex"/>
    <property type="evidence" value="ECO:0000318"/>
    <property type="project" value="GO_Central"/>
</dbReference>
<dbReference type="Gene3D" id="2.130.10.10">
    <property type="entry name" value="YVTN repeat-like/Quinoprotein amine dehydrogenase"/>
    <property type="match status" value="1"/>
</dbReference>
<dbReference type="InterPro" id="IPR052254">
    <property type="entry name" value="CUL4-DDB1_E3_ligase_receptor"/>
</dbReference>
<dbReference type="InterPro" id="IPR015943">
    <property type="entry name" value="WD40/YVTN_repeat-like_dom_sf"/>
</dbReference>
<dbReference type="InterPro" id="IPR036322">
    <property type="entry name" value="WD40_repeat_dom_sf"/>
</dbReference>
<dbReference type="InterPro" id="IPR001680">
    <property type="entry name" value="WD40_rpt"/>
</dbReference>
<dbReference type="PANTHER" id="PTHR44472:SF4">
    <property type="entry name" value="DDB1- AND CUL4-ASSOCIATED FACTOR 4-LIKE PROTEIN 2"/>
    <property type="match status" value="1"/>
</dbReference>
<dbReference type="PANTHER" id="PTHR44472">
    <property type="entry name" value="DDB1- AND CUL4-ASSOCIATED FACTOR 4-RELATED"/>
    <property type="match status" value="1"/>
</dbReference>
<dbReference type="Pfam" id="PF23761">
    <property type="entry name" value="Beta-prop_DCAF4"/>
    <property type="match status" value="1"/>
</dbReference>
<dbReference type="SMART" id="SM00320">
    <property type="entry name" value="WD40"/>
    <property type="match status" value="2"/>
</dbReference>
<dbReference type="SUPFAM" id="SSF50978">
    <property type="entry name" value="WD40 repeat-like"/>
    <property type="match status" value="1"/>
</dbReference>
<dbReference type="PROSITE" id="PS50082">
    <property type="entry name" value="WD_REPEATS_2"/>
    <property type="match status" value="1"/>
</dbReference>
<dbReference type="PROSITE" id="PS50294">
    <property type="entry name" value="WD_REPEATS_REGION"/>
    <property type="match status" value="1"/>
</dbReference>
<keyword id="KW-1267">Proteomics identification</keyword>
<keyword id="KW-1185">Reference proteome</keyword>
<keyword id="KW-0677">Repeat</keyword>
<keyword id="KW-0853">WD repeat</keyword>
<feature type="chain" id="PRO_0000245503" description="DDB1- and CUL4-associated factor 4-like protein 2">
    <location>
        <begin position="1"/>
        <end position="395"/>
    </location>
</feature>
<feature type="repeat" description="WD 1">
    <location>
        <begin position="268"/>
        <end position="307"/>
    </location>
</feature>
<feature type="repeat" description="WD 2">
    <location>
        <begin position="312"/>
        <end position="351"/>
    </location>
</feature>
<accession>Q8NA75</accession>
<name>DC4L2_HUMAN</name>
<proteinExistence type="evidence at protein level"/>
<sequence length="395" mass="43747">MESKRPRLLEEADKQKKTVRVGLNAPSMLRKNQLGFLRFANYCRIARELRVSCMQRKKVQIHSWDPSSLASDRFNRILANTNTDQLFTVNQVEAGGSKYGIITMRGLTTPELRVYPHKTLYVPNRKVNSMCWASLNHLDSHLLLCFVGLADTPSCAVLLPASLFIGSFPGMRRPGMLCSFQIPDAWSCAWSLSIHAYHSFSTGLSQQVLLTNVVTGHQQSFGTSSDVLAQQFAIMTPLLFNGCRSGEIFGIDLRCGNQGSGWKAICLSHDSAVTSLQILQDGQFLVSSDMTGTIKLWDLRATKCVTQYEGHVNNSAYLPVHVNEEEGVVAAVGQDCYTRIWSLRHGHLLTTIPSPYPASENDIPSVAFSSRLGGFRGAPGLLMAVREDLYCFSYG</sequence>
<protein>
    <recommendedName>
        <fullName>DDB1- and CUL4-associated factor 4-like protein 2</fullName>
    </recommendedName>
    <alternativeName>
        <fullName>WD repeat-containing protein 21C</fullName>
    </alternativeName>
</protein>
<organism>
    <name type="scientific">Homo sapiens</name>
    <name type="common">Human</name>
    <dbReference type="NCBI Taxonomy" id="9606"/>
    <lineage>
        <taxon>Eukaryota</taxon>
        <taxon>Metazoa</taxon>
        <taxon>Chordata</taxon>
        <taxon>Craniata</taxon>
        <taxon>Vertebrata</taxon>
        <taxon>Euteleostomi</taxon>
        <taxon>Mammalia</taxon>
        <taxon>Eutheria</taxon>
        <taxon>Euarchontoglires</taxon>
        <taxon>Primates</taxon>
        <taxon>Haplorrhini</taxon>
        <taxon>Catarrhini</taxon>
        <taxon>Hominidae</taxon>
        <taxon>Homo</taxon>
    </lineage>
</organism>
<reference key="1">
    <citation type="journal article" date="2004" name="Nat. Genet.">
        <title>Complete sequencing and characterization of 21,243 full-length human cDNAs.</title>
        <authorList>
            <person name="Ota T."/>
            <person name="Suzuki Y."/>
            <person name="Nishikawa T."/>
            <person name="Otsuki T."/>
            <person name="Sugiyama T."/>
            <person name="Irie R."/>
            <person name="Wakamatsu A."/>
            <person name="Hayashi K."/>
            <person name="Sato H."/>
            <person name="Nagai K."/>
            <person name="Kimura K."/>
            <person name="Makita H."/>
            <person name="Sekine M."/>
            <person name="Obayashi M."/>
            <person name="Nishi T."/>
            <person name="Shibahara T."/>
            <person name="Tanaka T."/>
            <person name="Ishii S."/>
            <person name="Yamamoto J."/>
            <person name="Saito K."/>
            <person name="Kawai Y."/>
            <person name="Isono Y."/>
            <person name="Nakamura Y."/>
            <person name="Nagahari K."/>
            <person name="Murakami K."/>
            <person name="Yasuda T."/>
            <person name="Iwayanagi T."/>
            <person name="Wagatsuma M."/>
            <person name="Shiratori A."/>
            <person name="Sudo H."/>
            <person name="Hosoiri T."/>
            <person name="Kaku Y."/>
            <person name="Kodaira H."/>
            <person name="Kondo H."/>
            <person name="Sugawara M."/>
            <person name="Takahashi M."/>
            <person name="Kanda K."/>
            <person name="Yokoi T."/>
            <person name="Furuya T."/>
            <person name="Kikkawa E."/>
            <person name="Omura Y."/>
            <person name="Abe K."/>
            <person name="Kamihara K."/>
            <person name="Katsuta N."/>
            <person name="Sato K."/>
            <person name="Tanikawa M."/>
            <person name="Yamazaki M."/>
            <person name="Ninomiya K."/>
            <person name="Ishibashi T."/>
            <person name="Yamashita H."/>
            <person name="Murakawa K."/>
            <person name="Fujimori K."/>
            <person name="Tanai H."/>
            <person name="Kimata M."/>
            <person name="Watanabe M."/>
            <person name="Hiraoka S."/>
            <person name="Chiba Y."/>
            <person name="Ishida S."/>
            <person name="Ono Y."/>
            <person name="Takiguchi S."/>
            <person name="Watanabe S."/>
            <person name="Yosida M."/>
            <person name="Hotuta T."/>
            <person name="Kusano J."/>
            <person name="Kanehori K."/>
            <person name="Takahashi-Fujii A."/>
            <person name="Hara H."/>
            <person name="Tanase T.-O."/>
            <person name="Nomura Y."/>
            <person name="Togiya S."/>
            <person name="Komai F."/>
            <person name="Hara R."/>
            <person name="Takeuchi K."/>
            <person name="Arita M."/>
            <person name="Imose N."/>
            <person name="Musashino K."/>
            <person name="Yuuki H."/>
            <person name="Oshima A."/>
            <person name="Sasaki N."/>
            <person name="Aotsuka S."/>
            <person name="Yoshikawa Y."/>
            <person name="Matsunawa H."/>
            <person name="Ichihara T."/>
            <person name="Shiohata N."/>
            <person name="Sano S."/>
            <person name="Moriya S."/>
            <person name="Momiyama H."/>
            <person name="Satoh N."/>
            <person name="Takami S."/>
            <person name="Terashima Y."/>
            <person name="Suzuki O."/>
            <person name="Nakagawa S."/>
            <person name="Senoh A."/>
            <person name="Mizoguchi H."/>
            <person name="Goto Y."/>
            <person name="Shimizu F."/>
            <person name="Wakebe H."/>
            <person name="Hishigaki H."/>
            <person name="Watanabe T."/>
            <person name="Sugiyama A."/>
            <person name="Takemoto M."/>
            <person name="Kawakami B."/>
            <person name="Yamazaki M."/>
            <person name="Watanabe K."/>
            <person name="Kumagai A."/>
            <person name="Itakura S."/>
            <person name="Fukuzumi Y."/>
            <person name="Fujimori Y."/>
            <person name="Komiyama M."/>
            <person name="Tashiro H."/>
            <person name="Tanigami A."/>
            <person name="Fujiwara T."/>
            <person name="Ono T."/>
            <person name="Yamada K."/>
            <person name="Fujii Y."/>
            <person name="Ozaki K."/>
            <person name="Hirao M."/>
            <person name="Ohmori Y."/>
            <person name="Kawabata A."/>
            <person name="Hikiji T."/>
            <person name="Kobatake N."/>
            <person name="Inagaki H."/>
            <person name="Ikema Y."/>
            <person name="Okamoto S."/>
            <person name="Okitani R."/>
            <person name="Kawakami T."/>
            <person name="Noguchi S."/>
            <person name="Itoh T."/>
            <person name="Shigeta K."/>
            <person name="Senba T."/>
            <person name="Matsumura K."/>
            <person name="Nakajima Y."/>
            <person name="Mizuno T."/>
            <person name="Morinaga M."/>
            <person name="Sasaki M."/>
            <person name="Togashi T."/>
            <person name="Oyama M."/>
            <person name="Hata H."/>
            <person name="Watanabe M."/>
            <person name="Komatsu T."/>
            <person name="Mizushima-Sugano J."/>
            <person name="Satoh T."/>
            <person name="Shirai Y."/>
            <person name="Takahashi Y."/>
            <person name="Nakagawa K."/>
            <person name="Okumura K."/>
            <person name="Nagase T."/>
            <person name="Nomura N."/>
            <person name="Kikuchi H."/>
            <person name="Masuho Y."/>
            <person name="Yamashita R."/>
            <person name="Nakai K."/>
            <person name="Yada T."/>
            <person name="Nakamura Y."/>
            <person name="Ohara O."/>
            <person name="Isogai T."/>
            <person name="Sugano S."/>
        </authorList>
    </citation>
    <scope>NUCLEOTIDE SEQUENCE [LARGE SCALE MRNA]</scope>
    <source>
        <tissue>Testis</tissue>
    </source>
</reference>
<reference key="2">
    <citation type="journal article" date="2004" name="Genome Res.">
        <title>The status, quality, and expansion of the NIH full-length cDNA project: the Mammalian Gene Collection (MGC).</title>
        <authorList>
            <consortium name="The MGC Project Team"/>
        </authorList>
    </citation>
    <scope>NUCLEOTIDE SEQUENCE [LARGE SCALE MRNA]</scope>
</reference>
<reference key="3">
    <citation type="journal article" date="2008" name="Proc. Natl. Acad. Sci. U.S.A.">
        <title>A quantitative atlas of mitotic phosphorylation.</title>
        <authorList>
            <person name="Dephoure N."/>
            <person name="Zhou C."/>
            <person name="Villen J."/>
            <person name="Beausoleil S.A."/>
            <person name="Bakalarski C.E."/>
            <person name="Elledge S.J."/>
            <person name="Gygi S.P."/>
        </authorList>
    </citation>
    <scope>IDENTIFICATION BY MASS SPECTROMETRY [LARGE SCALE ANALYSIS]</scope>
    <source>
        <tissue>Cervix carcinoma</tissue>
    </source>
</reference>